<feature type="signal peptide" evidence="1">
    <location>
        <begin position="1"/>
        <end position="22"/>
    </location>
</feature>
<feature type="chain" id="PRO_0000365631" description="Fungus-induced protein 1" evidence="1">
    <location>
        <begin position="23"/>
        <end position="62"/>
    </location>
</feature>
<evidence type="ECO:0000255" key="1"/>
<evidence type="ECO:0000312" key="2">
    <source>
        <dbReference type="EMBL" id="CAP39500.1"/>
    </source>
</evidence>
<keyword id="KW-1185">Reference proteome</keyword>
<keyword id="KW-0732">Signal</keyword>
<name>FIP1_CAEBR</name>
<reference evidence="2" key="1">
    <citation type="journal article" date="2003" name="PLoS Biol.">
        <title>The genome sequence of Caenorhabditis briggsae: a platform for comparative genomics.</title>
        <authorList>
            <person name="Stein L.D."/>
            <person name="Bao Z."/>
            <person name="Blasiar D."/>
            <person name="Blumenthal T."/>
            <person name="Brent M.R."/>
            <person name="Chen N."/>
            <person name="Chinwalla A."/>
            <person name="Clarke L."/>
            <person name="Clee C."/>
            <person name="Coghlan A."/>
            <person name="Coulson A."/>
            <person name="D'Eustachio P."/>
            <person name="Fitch D.H.A."/>
            <person name="Fulton L.A."/>
            <person name="Fulton R.E."/>
            <person name="Griffiths-Jones S."/>
            <person name="Harris T.W."/>
            <person name="Hillier L.W."/>
            <person name="Kamath R."/>
            <person name="Kuwabara P.E."/>
            <person name="Mardis E.R."/>
            <person name="Marra M.A."/>
            <person name="Miner T.L."/>
            <person name="Minx P."/>
            <person name="Mullikin J.C."/>
            <person name="Plumb R.W."/>
            <person name="Rogers J."/>
            <person name="Schein J.E."/>
            <person name="Sohrmann M."/>
            <person name="Spieth J."/>
            <person name="Stajich J.E."/>
            <person name="Wei C."/>
            <person name="Willey D."/>
            <person name="Wilson R.K."/>
            <person name="Durbin R.M."/>
            <person name="Waterston R.H."/>
        </authorList>
    </citation>
    <scope>NUCLEOTIDE SEQUENCE [LARGE SCALE GENOMIC DNA]</scope>
    <source>
        <strain evidence="2">AF16</strain>
    </source>
</reference>
<dbReference type="EMBL" id="HE600964">
    <property type="protein sequence ID" value="CAP39500.1"/>
    <property type="molecule type" value="Genomic_DNA"/>
</dbReference>
<dbReference type="FunCoup" id="A8Y3N1">
    <property type="interactions" value="1384"/>
</dbReference>
<dbReference type="STRING" id="6238.A8Y3N1"/>
<dbReference type="EnsemblMetazoa" id="CBG22925.1">
    <property type="protein sequence ID" value="CBG22925.1"/>
    <property type="gene ID" value="WBGene00041375"/>
</dbReference>
<dbReference type="KEGG" id="cbr:CBG_22925"/>
<dbReference type="CTD" id="8585014"/>
<dbReference type="WormBase" id="CBG22925">
    <property type="protein sequence ID" value="CBP12281"/>
    <property type="gene ID" value="WBGene00041375"/>
    <property type="gene designation" value="Cbr-fip-1"/>
</dbReference>
<dbReference type="eggNOG" id="ENOG502TISF">
    <property type="taxonomic scope" value="Eukaryota"/>
</dbReference>
<dbReference type="HOGENOM" id="CLU_2742320_0_0_1"/>
<dbReference type="InParanoid" id="A8Y3N1"/>
<dbReference type="OMA" id="QVNGFLF"/>
<dbReference type="Proteomes" id="UP000008549">
    <property type="component" value="Unassembled WGS sequence"/>
</dbReference>
<sequence>MSQNLFQILLIFAILAALQVQGFLFPTYSSGYDYDCYGYGNGYGNGYGNGYGYGNGYGYGGY</sequence>
<organism>
    <name type="scientific">Caenorhabditis briggsae</name>
    <dbReference type="NCBI Taxonomy" id="6238"/>
    <lineage>
        <taxon>Eukaryota</taxon>
        <taxon>Metazoa</taxon>
        <taxon>Ecdysozoa</taxon>
        <taxon>Nematoda</taxon>
        <taxon>Chromadorea</taxon>
        <taxon>Rhabditida</taxon>
        <taxon>Rhabditina</taxon>
        <taxon>Rhabditomorpha</taxon>
        <taxon>Rhabditoidea</taxon>
        <taxon>Rhabditidae</taxon>
        <taxon>Peloderinae</taxon>
        <taxon>Caenorhabditis</taxon>
    </lineage>
</organism>
<gene>
    <name evidence="2" type="primary">fip-1</name>
    <name type="ORF">CBG22925</name>
</gene>
<accession>A8Y3N1</accession>
<protein>
    <recommendedName>
        <fullName evidence="2">Fungus-induced protein 1</fullName>
    </recommendedName>
</protein>
<proteinExistence type="inferred from homology"/>